<evidence type="ECO:0000255" key="1">
    <source>
        <dbReference type="HAMAP-Rule" id="MF_00445"/>
    </source>
</evidence>
<geneLocation type="chloroplast"/>
<comment type="function">
    <text evidence="1">NDH shuttles electrons from NAD(P)H:plastoquinone, via FMN and iron-sulfur (Fe-S) centers, to quinones in the photosynthetic chain and possibly in a chloroplast respiratory chain. The immediate electron acceptor for the enzyme in this species is believed to be plastoquinone. Couples the redox reaction to proton translocation, and thus conserves the redox energy in a proton gradient.</text>
</comment>
<comment type="catalytic activity">
    <reaction evidence="1">
        <text>a plastoquinone + NADH + (n+1) H(+)(in) = a plastoquinol + NAD(+) + n H(+)(out)</text>
        <dbReference type="Rhea" id="RHEA:42608"/>
        <dbReference type="Rhea" id="RHEA-COMP:9561"/>
        <dbReference type="Rhea" id="RHEA-COMP:9562"/>
        <dbReference type="ChEBI" id="CHEBI:15378"/>
        <dbReference type="ChEBI" id="CHEBI:17757"/>
        <dbReference type="ChEBI" id="CHEBI:57540"/>
        <dbReference type="ChEBI" id="CHEBI:57945"/>
        <dbReference type="ChEBI" id="CHEBI:62192"/>
    </reaction>
</comment>
<comment type="catalytic activity">
    <reaction evidence="1">
        <text>a plastoquinone + NADPH + (n+1) H(+)(in) = a plastoquinol + NADP(+) + n H(+)(out)</text>
        <dbReference type="Rhea" id="RHEA:42612"/>
        <dbReference type="Rhea" id="RHEA-COMP:9561"/>
        <dbReference type="Rhea" id="RHEA-COMP:9562"/>
        <dbReference type="ChEBI" id="CHEBI:15378"/>
        <dbReference type="ChEBI" id="CHEBI:17757"/>
        <dbReference type="ChEBI" id="CHEBI:57783"/>
        <dbReference type="ChEBI" id="CHEBI:58349"/>
        <dbReference type="ChEBI" id="CHEBI:62192"/>
    </reaction>
</comment>
<comment type="subunit">
    <text evidence="1">NDH is composed of at least 16 different subunits, 5 of which are encoded in the nucleus.</text>
</comment>
<comment type="subcellular location">
    <subcellularLocation>
        <location evidence="1">Plastid</location>
        <location evidence="1">Chloroplast thylakoid membrane</location>
        <topology evidence="1">Multi-pass membrane protein</topology>
    </subcellularLocation>
</comment>
<comment type="similarity">
    <text evidence="1">Belongs to the complex I subunit 2 family.</text>
</comment>
<dbReference type="EC" id="7.1.1.-" evidence="1"/>
<dbReference type="EMBL" id="AY958085">
    <property type="protein sequence ID" value="AAX45698.1"/>
    <property type="molecule type" value="Genomic_DNA"/>
</dbReference>
<dbReference type="RefSeq" id="YP_636415.1">
    <property type="nucleotide sequence ID" value="NC_008116.1"/>
</dbReference>
<dbReference type="SMR" id="Q32RW1"/>
<dbReference type="GeneID" id="4108653"/>
<dbReference type="GO" id="GO:0009535">
    <property type="term" value="C:chloroplast thylakoid membrane"/>
    <property type="evidence" value="ECO:0007669"/>
    <property type="project" value="UniProtKB-SubCell"/>
</dbReference>
<dbReference type="GO" id="GO:0008137">
    <property type="term" value="F:NADH dehydrogenase (ubiquinone) activity"/>
    <property type="evidence" value="ECO:0007669"/>
    <property type="project" value="InterPro"/>
</dbReference>
<dbReference type="GO" id="GO:0048038">
    <property type="term" value="F:quinone binding"/>
    <property type="evidence" value="ECO:0007669"/>
    <property type="project" value="UniProtKB-KW"/>
</dbReference>
<dbReference type="GO" id="GO:0042773">
    <property type="term" value="P:ATP synthesis coupled electron transport"/>
    <property type="evidence" value="ECO:0007669"/>
    <property type="project" value="InterPro"/>
</dbReference>
<dbReference type="GO" id="GO:0019684">
    <property type="term" value="P:photosynthesis, light reaction"/>
    <property type="evidence" value="ECO:0007669"/>
    <property type="project" value="UniProtKB-UniRule"/>
</dbReference>
<dbReference type="HAMAP" id="MF_00445">
    <property type="entry name" value="NDH1_NuoN_1"/>
    <property type="match status" value="1"/>
</dbReference>
<dbReference type="InterPro" id="IPR010096">
    <property type="entry name" value="NADH-Q_OxRdtase_suN/2"/>
</dbReference>
<dbReference type="InterPro" id="IPR001750">
    <property type="entry name" value="ND/Mrp_TM"/>
</dbReference>
<dbReference type="InterPro" id="IPR045693">
    <property type="entry name" value="Ndh2_N"/>
</dbReference>
<dbReference type="NCBIfam" id="TIGR01770">
    <property type="entry name" value="NDH_I_N"/>
    <property type="match status" value="1"/>
</dbReference>
<dbReference type="NCBIfam" id="NF002701">
    <property type="entry name" value="PRK02504.1"/>
    <property type="match status" value="1"/>
</dbReference>
<dbReference type="PANTHER" id="PTHR22773">
    <property type="entry name" value="NADH DEHYDROGENASE"/>
    <property type="match status" value="1"/>
</dbReference>
<dbReference type="Pfam" id="PF19530">
    <property type="entry name" value="Ndh2_N"/>
    <property type="match status" value="1"/>
</dbReference>
<dbReference type="Pfam" id="PF00361">
    <property type="entry name" value="Proton_antipo_M"/>
    <property type="match status" value="1"/>
</dbReference>
<dbReference type="PRINTS" id="PR01434">
    <property type="entry name" value="NADHDHGNASE5"/>
</dbReference>
<organism>
    <name type="scientific">Staurastrum punctulatum</name>
    <name type="common">Green alga</name>
    <name type="synonym">Cosmoastrum punctulatum</name>
    <dbReference type="NCBI Taxonomy" id="102822"/>
    <lineage>
        <taxon>Eukaryota</taxon>
        <taxon>Viridiplantae</taxon>
        <taxon>Streptophyta</taxon>
        <taxon>Zygnematophyceae</taxon>
        <taxon>Zygnematophycidae</taxon>
        <taxon>Desmidiales</taxon>
        <taxon>Desmidiaceae</taxon>
        <taxon>Staurastrum</taxon>
    </lineage>
</organism>
<name>NU2C_STAPU</name>
<reference key="1">
    <citation type="journal article" date="2005" name="BMC Biol.">
        <title>The complete chloroplast DNA sequences of the charophycean green algae Staurastrum and Zygnema reveal that the chloroplast genome underwent extensive changes during the evolution of the Zygnematales.</title>
        <authorList>
            <person name="Turmel M."/>
            <person name="Otis C."/>
            <person name="Lemieux C."/>
        </authorList>
    </citation>
    <scope>NUCLEOTIDE SEQUENCE [LARGE SCALE GENOMIC DNA]</scope>
</reference>
<sequence length="513" mass="56091">METNQLFSLDNLITILPECVLIICLLTILMIDVITKKSVWLSNIALLGLLTSTFILLFQLTNNEVGFTAFLGSFQVDGFTIAFRCLLTLSSALCIPLSTEYIRRSGMTQAEFLILLLTATLGGMFLCGANDLVTIFVSLECLSLSSYLLAGQAKKDIRSNEASLKYLLMGGASSSILVYGFSWLYGLSGGELQLSKIVNGISSQDIYLSSAVSLDGKTFGALGLWVAFVCILVGIGFKISAVPFHQWTPDVYEGSPTPVVAFLSVGSKAAGLALATRLLSIVFPAIEDQWHIVLEIVAFLSMVFGNLIAATQTSMKRMLAYSSISQAGYLLIAILVGNSDGYASMITYLLIYTFMNLGAFACTVIFGLRTGTDQIRDYTGLYLKDPWLAFALSICLLSLAGMPPLAGFFGKLYLFWCGWQSHLYLLVYTGLITSVISLYYYLRVVKAMMTKEVKEMSTYVREYVTPSMSIFSSSSIELGLTLCVLASSILGFFMNPLIDVTKQSMLVNNFLVF</sequence>
<keyword id="KW-0150">Chloroplast</keyword>
<keyword id="KW-0472">Membrane</keyword>
<keyword id="KW-0520">NAD</keyword>
<keyword id="KW-0521">NADP</keyword>
<keyword id="KW-0934">Plastid</keyword>
<keyword id="KW-0618">Plastoquinone</keyword>
<keyword id="KW-0874">Quinone</keyword>
<keyword id="KW-0793">Thylakoid</keyword>
<keyword id="KW-1278">Translocase</keyword>
<keyword id="KW-0812">Transmembrane</keyword>
<keyword id="KW-1133">Transmembrane helix</keyword>
<keyword id="KW-0813">Transport</keyword>
<accession>Q32RW1</accession>
<proteinExistence type="inferred from homology"/>
<protein>
    <recommendedName>
        <fullName evidence="1">NAD(P)H-quinone oxidoreductase subunit 2, chloroplastic</fullName>
        <ecNumber evidence="1">7.1.1.-</ecNumber>
    </recommendedName>
    <alternativeName>
        <fullName evidence="1">NAD(P)H dehydrogenase, subunit 2</fullName>
    </alternativeName>
    <alternativeName>
        <fullName evidence="1">NADH-plastoquinone oxidoreductase subunit 2</fullName>
    </alternativeName>
</protein>
<gene>
    <name evidence="1" type="primary">ndhB</name>
</gene>
<feature type="chain" id="PRO_0000225351" description="NAD(P)H-quinone oxidoreductase subunit 2, chloroplastic">
    <location>
        <begin position="1"/>
        <end position="513"/>
    </location>
</feature>
<feature type="transmembrane region" description="Helical" evidence="1">
    <location>
        <begin position="11"/>
        <end position="31"/>
    </location>
</feature>
<feature type="transmembrane region" description="Helical" evidence="1">
    <location>
        <begin position="38"/>
        <end position="58"/>
    </location>
</feature>
<feature type="transmembrane region" description="Helical" evidence="1">
    <location>
        <begin position="78"/>
        <end position="98"/>
    </location>
</feature>
<feature type="transmembrane region" description="Helical" evidence="1">
    <location>
        <begin position="112"/>
        <end position="132"/>
    </location>
</feature>
<feature type="transmembrane region" description="Helical" evidence="1">
    <location>
        <begin position="133"/>
        <end position="153"/>
    </location>
</feature>
<feature type="transmembrane region" description="Helical" evidence="1">
    <location>
        <begin position="167"/>
        <end position="187"/>
    </location>
</feature>
<feature type="transmembrane region" description="Helical" evidence="1">
    <location>
        <begin position="219"/>
        <end position="239"/>
    </location>
</feature>
<feature type="transmembrane region" description="Helical" evidence="1">
    <location>
        <begin position="256"/>
        <end position="276"/>
    </location>
</feature>
<feature type="transmembrane region" description="Helical" evidence="1">
    <location>
        <begin position="290"/>
        <end position="310"/>
    </location>
</feature>
<feature type="transmembrane region" description="Helical" evidence="1">
    <location>
        <begin position="318"/>
        <end position="338"/>
    </location>
</feature>
<feature type="transmembrane region" description="Helical" evidence="1">
    <location>
        <begin position="348"/>
        <end position="368"/>
    </location>
</feature>
<feature type="transmembrane region" description="Helical" evidence="1">
    <location>
        <begin position="389"/>
        <end position="409"/>
    </location>
</feature>
<feature type="transmembrane region" description="Helical" evidence="1">
    <location>
        <begin position="422"/>
        <end position="442"/>
    </location>
</feature>
<feature type="transmembrane region" description="Helical" evidence="1">
    <location>
        <begin position="478"/>
        <end position="498"/>
    </location>
</feature>